<keyword id="KW-0067">ATP-binding</keyword>
<keyword id="KW-0963">Cytoplasm</keyword>
<keyword id="KW-0418">Kinase</keyword>
<keyword id="KW-0545">Nucleotide biosynthesis</keyword>
<keyword id="KW-0547">Nucleotide-binding</keyword>
<keyword id="KW-0808">Transferase</keyword>
<comment type="function">
    <text evidence="1">Catalyzes the reversible transfer of the terminal phosphate group between ATP and AMP. Plays an important role in cellular energy homeostasis and in adenine nucleotide metabolism.</text>
</comment>
<comment type="catalytic activity">
    <reaction evidence="1">
        <text>AMP + ATP = 2 ADP</text>
        <dbReference type="Rhea" id="RHEA:12973"/>
        <dbReference type="ChEBI" id="CHEBI:30616"/>
        <dbReference type="ChEBI" id="CHEBI:456215"/>
        <dbReference type="ChEBI" id="CHEBI:456216"/>
        <dbReference type="EC" id="2.7.4.3"/>
    </reaction>
</comment>
<comment type="pathway">
    <text evidence="1">Purine metabolism; AMP biosynthesis via salvage pathway; AMP from ADP: step 1/1.</text>
</comment>
<comment type="subunit">
    <text evidence="1">Monomer.</text>
</comment>
<comment type="subcellular location">
    <subcellularLocation>
        <location evidence="1">Cytoplasm</location>
    </subcellularLocation>
</comment>
<comment type="domain">
    <text evidence="1">Consists of three domains, a large central CORE domain and two small peripheral domains, NMPbind and LID, which undergo movements during catalysis. The LID domain closes over the site of phosphoryl transfer upon ATP binding. Assembling and dissambling the active center during each catalytic cycle provides an effective means to prevent ATP hydrolysis.</text>
</comment>
<comment type="similarity">
    <text evidence="1">Belongs to the adenylate kinase family.</text>
</comment>
<sequence length="223" mass="24648">MNILTFGPNGSGKGTQGSLVKKKYNLAHIESGAIFREHIGGGTELGMKAKGYIDKGELVPDEITIPMILETLKAKGGNGWLLDGFPRNMVQAEKLWEALQKEGMKLDYVIEILLDRQIAKDRIMGRRLCANDPNHPNNIFIDAIKPNGDKCRVCGGDLKTRSDDQDEDAINKRHDIYYDTNTGTLAAAYFYKKLAGEGKTKYIELEGAGSIDSIKETLLSQLD</sequence>
<reference key="1">
    <citation type="journal article" date="2009" name="Genome Res.">
        <title>Whole genome sequence of Desulfovibrio magneticus strain RS-1 revealed common gene clusters in magnetotactic bacteria.</title>
        <authorList>
            <person name="Nakazawa H."/>
            <person name="Arakaki A."/>
            <person name="Narita-Yamada S."/>
            <person name="Yashiro I."/>
            <person name="Jinno K."/>
            <person name="Aoki N."/>
            <person name="Tsuruyama A."/>
            <person name="Okamura Y."/>
            <person name="Tanikawa S."/>
            <person name="Fujita N."/>
            <person name="Takeyama H."/>
            <person name="Matsunaga T."/>
        </authorList>
    </citation>
    <scope>NUCLEOTIDE SEQUENCE [LARGE SCALE GENOMIC DNA]</scope>
    <source>
        <strain>ATCC 700980 / DSM 13731 / RS-1</strain>
    </source>
</reference>
<dbReference type="EC" id="2.7.4.3" evidence="1"/>
<dbReference type="EMBL" id="AP010904">
    <property type="protein sequence ID" value="BAH75130.1"/>
    <property type="molecule type" value="Genomic_DNA"/>
</dbReference>
<dbReference type="RefSeq" id="WP_015860333.1">
    <property type="nucleotide sequence ID" value="NC_012796.1"/>
</dbReference>
<dbReference type="SMR" id="C4XPE9"/>
<dbReference type="STRING" id="573370.DMR_16390"/>
<dbReference type="KEGG" id="dma:DMR_16390"/>
<dbReference type="eggNOG" id="COG0563">
    <property type="taxonomic scope" value="Bacteria"/>
</dbReference>
<dbReference type="HOGENOM" id="CLU_032354_1_2_7"/>
<dbReference type="OrthoDB" id="9805030at2"/>
<dbReference type="UniPathway" id="UPA00588">
    <property type="reaction ID" value="UER00649"/>
</dbReference>
<dbReference type="Proteomes" id="UP000009071">
    <property type="component" value="Chromosome"/>
</dbReference>
<dbReference type="GO" id="GO:0005737">
    <property type="term" value="C:cytoplasm"/>
    <property type="evidence" value="ECO:0007669"/>
    <property type="project" value="UniProtKB-SubCell"/>
</dbReference>
<dbReference type="GO" id="GO:0004017">
    <property type="term" value="F:adenylate kinase activity"/>
    <property type="evidence" value="ECO:0007669"/>
    <property type="project" value="UniProtKB-UniRule"/>
</dbReference>
<dbReference type="GO" id="GO:0005524">
    <property type="term" value="F:ATP binding"/>
    <property type="evidence" value="ECO:0007669"/>
    <property type="project" value="UniProtKB-UniRule"/>
</dbReference>
<dbReference type="GO" id="GO:0044209">
    <property type="term" value="P:AMP salvage"/>
    <property type="evidence" value="ECO:0007669"/>
    <property type="project" value="UniProtKB-UniRule"/>
</dbReference>
<dbReference type="CDD" id="cd01428">
    <property type="entry name" value="ADK"/>
    <property type="match status" value="1"/>
</dbReference>
<dbReference type="Gene3D" id="3.40.50.300">
    <property type="entry name" value="P-loop containing nucleotide triphosphate hydrolases"/>
    <property type="match status" value="1"/>
</dbReference>
<dbReference type="HAMAP" id="MF_00235">
    <property type="entry name" value="Adenylate_kinase_Adk"/>
    <property type="match status" value="1"/>
</dbReference>
<dbReference type="InterPro" id="IPR000850">
    <property type="entry name" value="Adenylat/UMP-CMP_kin"/>
</dbReference>
<dbReference type="InterPro" id="IPR033690">
    <property type="entry name" value="Adenylat_kinase_CS"/>
</dbReference>
<dbReference type="InterPro" id="IPR027417">
    <property type="entry name" value="P-loop_NTPase"/>
</dbReference>
<dbReference type="NCBIfam" id="NF011102">
    <property type="entry name" value="PRK14529.1"/>
    <property type="match status" value="1"/>
</dbReference>
<dbReference type="PANTHER" id="PTHR23359">
    <property type="entry name" value="NUCLEOTIDE KINASE"/>
    <property type="match status" value="1"/>
</dbReference>
<dbReference type="Pfam" id="PF00406">
    <property type="entry name" value="ADK"/>
    <property type="match status" value="1"/>
</dbReference>
<dbReference type="PRINTS" id="PR00094">
    <property type="entry name" value="ADENYLTKNASE"/>
</dbReference>
<dbReference type="SUPFAM" id="SSF52540">
    <property type="entry name" value="P-loop containing nucleoside triphosphate hydrolases"/>
    <property type="match status" value="1"/>
</dbReference>
<dbReference type="PROSITE" id="PS00113">
    <property type="entry name" value="ADENYLATE_KINASE"/>
    <property type="match status" value="1"/>
</dbReference>
<proteinExistence type="inferred from homology"/>
<accession>C4XPE9</accession>
<gene>
    <name evidence="1" type="primary">adk</name>
    <name type="ordered locus">DMR_16390</name>
</gene>
<feature type="chain" id="PRO_1000204407" description="Adenylate kinase">
    <location>
        <begin position="1"/>
        <end position="223"/>
    </location>
</feature>
<feature type="region of interest" description="NMP" evidence="1">
    <location>
        <begin position="30"/>
        <end position="59"/>
    </location>
</feature>
<feature type="region of interest" description="LID" evidence="1">
    <location>
        <begin position="125"/>
        <end position="164"/>
    </location>
</feature>
<feature type="binding site" evidence="1">
    <location>
        <begin position="10"/>
        <end position="15"/>
    </location>
    <ligand>
        <name>ATP</name>
        <dbReference type="ChEBI" id="CHEBI:30616"/>
    </ligand>
</feature>
<feature type="binding site" evidence="1">
    <location>
        <position position="31"/>
    </location>
    <ligand>
        <name>AMP</name>
        <dbReference type="ChEBI" id="CHEBI:456215"/>
    </ligand>
</feature>
<feature type="binding site" evidence="1">
    <location>
        <position position="36"/>
    </location>
    <ligand>
        <name>AMP</name>
        <dbReference type="ChEBI" id="CHEBI:456215"/>
    </ligand>
</feature>
<feature type="binding site" evidence="1">
    <location>
        <begin position="57"/>
        <end position="59"/>
    </location>
    <ligand>
        <name>AMP</name>
        <dbReference type="ChEBI" id="CHEBI:456215"/>
    </ligand>
</feature>
<feature type="binding site" evidence="1">
    <location>
        <begin position="84"/>
        <end position="87"/>
    </location>
    <ligand>
        <name>AMP</name>
        <dbReference type="ChEBI" id="CHEBI:456215"/>
    </ligand>
</feature>
<feature type="binding site" evidence="1">
    <location>
        <position position="91"/>
    </location>
    <ligand>
        <name>AMP</name>
        <dbReference type="ChEBI" id="CHEBI:456215"/>
    </ligand>
</feature>
<feature type="binding site" evidence="1">
    <location>
        <position position="126"/>
    </location>
    <ligand>
        <name>ATP</name>
        <dbReference type="ChEBI" id="CHEBI:30616"/>
    </ligand>
</feature>
<feature type="binding site" evidence="1">
    <location>
        <position position="161"/>
    </location>
    <ligand>
        <name>AMP</name>
        <dbReference type="ChEBI" id="CHEBI:456215"/>
    </ligand>
</feature>
<feature type="binding site" evidence="1">
    <location>
        <position position="173"/>
    </location>
    <ligand>
        <name>AMP</name>
        <dbReference type="ChEBI" id="CHEBI:456215"/>
    </ligand>
</feature>
<feature type="binding site" evidence="1">
    <location>
        <position position="209"/>
    </location>
    <ligand>
        <name>ATP</name>
        <dbReference type="ChEBI" id="CHEBI:30616"/>
    </ligand>
</feature>
<protein>
    <recommendedName>
        <fullName evidence="1">Adenylate kinase</fullName>
        <shortName evidence="1">AK</shortName>
        <ecNumber evidence="1">2.7.4.3</ecNumber>
    </recommendedName>
    <alternativeName>
        <fullName evidence="1">ATP-AMP transphosphorylase</fullName>
    </alternativeName>
    <alternativeName>
        <fullName evidence="1">ATP:AMP phosphotransferase</fullName>
    </alternativeName>
    <alternativeName>
        <fullName evidence="1">Adenylate monophosphate kinase</fullName>
    </alternativeName>
</protein>
<organism>
    <name type="scientific">Solidesulfovibrio magneticus (strain ATCC 700980 / DSM 13731 / RS-1)</name>
    <name type="common">Desulfovibrio magneticus</name>
    <dbReference type="NCBI Taxonomy" id="573370"/>
    <lineage>
        <taxon>Bacteria</taxon>
        <taxon>Pseudomonadati</taxon>
        <taxon>Thermodesulfobacteriota</taxon>
        <taxon>Desulfovibrionia</taxon>
        <taxon>Desulfovibrionales</taxon>
        <taxon>Desulfovibrionaceae</taxon>
        <taxon>Solidesulfovibrio</taxon>
    </lineage>
</organism>
<evidence type="ECO:0000255" key="1">
    <source>
        <dbReference type="HAMAP-Rule" id="MF_00235"/>
    </source>
</evidence>
<name>KAD_SOLM1</name>